<evidence type="ECO:0000269" key="1">
    <source>
    </source>
</evidence>
<evidence type="ECO:0000269" key="2">
    <source>
    </source>
</evidence>
<dbReference type="EMBL" id="X72911">
    <property type="protein sequence ID" value="CAA51416.1"/>
    <property type="molecule type" value="Genomic_DNA"/>
</dbReference>
<dbReference type="EMBL" id="CU329671">
    <property type="protein sequence ID" value="CAA21151.1"/>
    <property type="molecule type" value="Genomic_DNA"/>
</dbReference>
<dbReference type="PIR" id="A47731">
    <property type="entry name" value="S35794"/>
</dbReference>
<dbReference type="RefSeq" id="NP_595961.1">
    <property type="nucleotide sequence ID" value="NM_001021870.2"/>
</dbReference>
<dbReference type="SMR" id="P36589"/>
<dbReference type="BioGRID" id="277150">
    <property type="interactions" value="33"/>
</dbReference>
<dbReference type="STRING" id="284812.P36589"/>
<dbReference type="PaxDb" id="4896-SPBC24C6.07.1"/>
<dbReference type="EnsemblFungi" id="SPBC24C6.07.1">
    <property type="protein sequence ID" value="SPBC24C6.07.1:pep"/>
    <property type="gene ID" value="SPBC24C6.07"/>
</dbReference>
<dbReference type="GeneID" id="2540624"/>
<dbReference type="KEGG" id="spo:2540624"/>
<dbReference type="PomBase" id="SPBC24C6.07">
    <property type="gene designation" value="cdc14"/>
</dbReference>
<dbReference type="VEuPathDB" id="FungiDB:SPBC24C6.07"/>
<dbReference type="eggNOG" id="ENOG502S6JC">
    <property type="taxonomic scope" value="Eukaryota"/>
</dbReference>
<dbReference type="HOGENOM" id="CLU_052857_0_0_1"/>
<dbReference type="InParanoid" id="P36589"/>
<dbReference type="OMA" id="YMNILLD"/>
<dbReference type="PhylomeDB" id="P36589"/>
<dbReference type="CD-CODE" id="576F0A76">
    <property type="entry name" value="Centrosome"/>
</dbReference>
<dbReference type="PRO" id="PR:P36589"/>
<dbReference type="Proteomes" id="UP000002485">
    <property type="component" value="Chromosome II"/>
</dbReference>
<dbReference type="GO" id="GO:0005737">
    <property type="term" value="C:cytoplasm"/>
    <property type="evidence" value="ECO:0007669"/>
    <property type="project" value="UniProtKB-KW"/>
</dbReference>
<dbReference type="GO" id="GO:0071958">
    <property type="term" value="C:new mitotic spindle pole body"/>
    <property type="evidence" value="ECO:0000314"/>
    <property type="project" value="PomBase"/>
</dbReference>
<dbReference type="GO" id="GO:0030295">
    <property type="term" value="F:protein kinase activator activity"/>
    <property type="evidence" value="ECO:0000314"/>
    <property type="project" value="PomBase"/>
</dbReference>
<dbReference type="GO" id="GO:0051301">
    <property type="term" value="P:cell division"/>
    <property type="evidence" value="ECO:0007669"/>
    <property type="project" value="UniProtKB-KW"/>
</dbReference>
<dbReference type="GO" id="GO:1902412">
    <property type="term" value="P:regulation of mitotic cytokinesis"/>
    <property type="evidence" value="ECO:0000269"/>
    <property type="project" value="PomBase"/>
</dbReference>
<dbReference type="GO" id="GO:0031028">
    <property type="term" value="P:septation initiation signaling"/>
    <property type="evidence" value="ECO:0000269"/>
    <property type="project" value="PomBase"/>
</dbReference>
<dbReference type="InterPro" id="IPR016024">
    <property type="entry name" value="ARM-type_fold"/>
</dbReference>
<dbReference type="InterPro" id="IPR012535">
    <property type="entry name" value="Cell_div_Cdc14"/>
</dbReference>
<dbReference type="PANTHER" id="PTHR34065">
    <property type="entry name" value="CELL DIVISION CONTROL PROTEIN 14"/>
    <property type="match status" value="1"/>
</dbReference>
<dbReference type="PANTHER" id="PTHR34065:SF1">
    <property type="entry name" value="CELL DIVISION CONTROL PROTEIN 14"/>
    <property type="match status" value="1"/>
</dbReference>
<dbReference type="Pfam" id="PF08045">
    <property type="entry name" value="CDC14"/>
    <property type="match status" value="1"/>
</dbReference>
<dbReference type="SUPFAM" id="SSF48371">
    <property type="entry name" value="ARM repeat"/>
    <property type="match status" value="1"/>
</dbReference>
<organism>
    <name type="scientific">Schizosaccharomyces pombe (strain 972 / ATCC 24843)</name>
    <name type="common">Fission yeast</name>
    <dbReference type="NCBI Taxonomy" id="284812"/>
    <lineage>
        <taxon>Eukaryota</taxon>
        <taxon>Fungi</taxon>
        <taxon>Dikarya</taxon>
        <taxon>Ascomycota</taxon>
        <taxon>Taphrinomycotina</taxon>
        <taxon>Schizosaccharomycetes</taxon>
        <taxon>Schizosaccharomycetales</taxon>
        <taxon>Schizosaccharomycetaceae</taxon>
        <taxon>Schizosaccharomyces</taxon>
    </lineage>
</organism>
<feature type="chain" id="PRO_0000089442" description="Cell division control protein 14">
    <location>
        <begin position="1"/>
        <end position="240"/>
    </location>
</feature>
<gene>
    <name type="primary">cdc14</name>
    <name type="ORF">SPBC24C6.07</name>
</gene>
<keyword id="KW-0131">Cell cycle</keyword>
<keyword id="KW-0132">Cell division</keyword>
<keyword id="KW-0963">Cytoplasm</keyword>
<keyword id="KW-0206">Cytoskeleton</keyword>
<keyword id="KW-0498">Mitosis</keyword>
<keyword id="KW-1185">Reference proteome</keyword>
<reference key="1">
    <citation type="journal article" date="1993" name="Mol. Biol. Cell">
        <title>The Schizosaccharomyces pombe cdc14 gene is required for septum formation and can also inhibit nuclear division.</title>
        <authorList>
            <person name="Fankhauser C."/>
            <person name="Simanis V."/>
        </authorList>
    </citation>
    <scope>NUCLEOTIDE SEQUENCE [GENOMIC DNA]</scope>
    <source>
        <strain>972 / ATCC 24843</strain>
    </source>
</reference>
<reference key="2">
    <citation type="journal article" date="2002" name="Nature">
        <title>The genome sequence of Schizosaccharomyces pombe.</title>
        <authorList>
            <person name="Wood V."/>
            <person name="Gwilliam R."/>
            <person name="Rajandream M.A."/>
            <person name="Lyne M.H."/>
            <person name="Lyne R."/>
            <person name="Stewart A."/>
            <person name="Sgouros J.G."/>
            <person name="Peat N."/>
            <person name="Hayles J."/>
            <person name="Baker S.G."/>
            <person name="Basham D."/>
            <person name="Bowman S."/>
            <person name="Brooks K."/>
            <person name="Brown D."/>
            <person name="Brown S."/>
            <person name="Chillingworth T."/>
            <person name="Churcher C.M."/>
            <person name="Collins M."/>
            <person name="Connor R."/>
            <person name="Cronin A."/>
            <person name="Davis P."/>
            <person name="Feltwell T."/>
            <person name="Fraser A."/>
            <person name="Gentles S."/>
            <person name="Goble A."/>
            <person name="Hamlin N."/>
            <person name="Harris D.E."/>
            <person name="Hidalgo J."/>
            <person name="Hodgson G."/>
            <person name="Holroyd S."/>
            <person name="Hornsby T."/>
            <person name="Howarth S."/>
            <person name="Huckle E.J."/>
            <person name="Hunt S."/>
            <person name="Jagels K."/>
            <person name="James K.D."/>
            <person name="Jones L."/>
            <person name="Jones M."/>
            <person name="Leather S."/>
            <person name="McDonald S."/>
            <person name="McLean J."/>
            <person name="Mooney P."/>
            <person name="Moule S."/>
            <person name="Mungall K.L."/>
            <person name="Murphy L.D."/>
            <person name="Niblett D."/>
            <person name="Odell C."/>
            <person name="Oliver K."/>
            <person name="O'Neil S."/>
            <person name="Pearson D."/>
            <person name="Quail M.A."/>
            <person name="Rabbinowitsch E."/>
            <person name="Rutherford K.M."/>
            <person name="Rutter S."/>
            <person name="Saunders D."/>
            <person name="Seeger K."/>
            <person name="Sharp S."/>
            <person name="Skelton J."/>
            <person name="Simmonds M.N."/>
            <person name="Squares R."/>
            <person name="Squares S."/>
            <person name="Stevens K."/>
            <person name="Taylor K."/>
            <person name="Taylor R.G."/>
            <person name="Tivey A."/>
            <person name="Walsh S.V."/>
            <person name="Warren T."/>
            <person name="Whitehead S."/>
            <person name="Woodward J.R."/>
            <person name="Volckaert G."/>
            <person name="Aert R."/>
            <person name="Robben J."/>
            <person name="Grymonprez B."/>
            <person name="Weltjens I."/>
            <person name="Vanstreels E."/>
            <person name="Rieger M."/>
            <person name="Schaefer M."/>
            <person name="Mueller-Auer S."/>
            <person name="Gabel C."/>
            <person name="Fuchs M."/>
            <person name="Duesterhoeft A."/>
            <person name="Fritzc C."/>
            <person name="Holzer E."/>
            <person name="Moestl D."/>
            <person name="Hilbert H."/>
            <person name="Borzym K."/>
            <person name="Langer I."/>
            <person name="Beck A."/>
            <person name="Lehrach H."/>
            <person name="Reinhardt R."/>
            <person name="Pohl T.M."/>
            <person name="Eger P."/>
            <person name="Zimmermann W."/>
            <person name="Wedler H."/>
            <person name="Wambutt R."/>
            <person name="Purnelle B."/>
            <person name="Goffeau A."/>
            <person name="Cadieu E."/>
            <person name="Dreano S."/>
            <person name="Gloux S."/>
            <person name="Lelaure V."/>
            <person name="Mottier S."/>
            <person name="Galibert F."/>
            <person name="Aves S.J."/>
            <person name="Xiang Z."/>
            <person name="Hunt C."/>
            <person name="Moore K."/>
            <person name="Hurst S.M."/>
            <person name="Lucas M."/>
            <person name="Rochet M."/>
            <person name="Gaillardin C."/>
            <person name="Tallada V.A."/>
            <person name="Garzon A."/>
            <person name="Thode G."/>
            <person name="Daga R.R."/>
            <person name="Cruzado L."/>
            <person name="Jimenez J."/>
            <person name="Sanchez M."/>
            <person name="del Rey F."/>
            <person name="Benito J."/>
            <person name="Dominguez A."/>
            <person name="Revuelta J.L."/>
            <person name="Moreno S."/>
            <person name="Armstrong J."/>
            <person name="Forsburg S.L."/>
            <person name="Cerutti L."/>
            <person name="Lowe T."/>
            <person name="McCombie W.R."/>
            <person name="Paulsen I."/>
            <person name="Potashkin J."/>
            <person name="Shpakovski G.V."/>
            <person name="Ussery D."/>
            <person name="Barrell B.G."/>
            <person name="Nurse P."/>
        </authorList>
    </citation>
    <scope>NUCLEOTIDE SEQUENCE [LARGE SCALE GENOMIC DNA]</scope>
    <source>
        <strain>972 / ATCC 24843</strain>
    </source>
</reference>
<reference key="3">
    <citation type="journal article" date="2001" name="J. Biol. Chem.">
        <title>Interaction between the noncatalytic region of Sid1p kinase and Cdc14p is required for full catalytic activity and localization of Sid1p.</title>
        <authorList>
            <person name="Guertin D.A."/>
            <person name="McCollum D."/>
        </authorList>
    </citation>
    <scope>FUNCTION</scope>
    <scope>INTERACTION WITH SID1</scope>
    <scope>SUBCELLULAR LOCATION</scope>
</reference>
<reference key="4">
    <citation type="journal article" date="2000" name="EMBO J.">
        <title>The role of the sid1p kinase and cdc14p in regulating the onset of cytokinesis in fission yeast.</title>
        <authorList>
            <person name="Guertin D.A."/>
            <person name="Chang L."/>
            <person name="Irshad F."/>
            <person name="Gould K.L."/>
            <person name="McCollum D."/>
        </authorList>
    </citation>
    <scope>FUNCTION</scope>
    <scope>INTERACTION WITH SID1</scope>
    <scope>SUBCELLULAR LOCATION</scope>
</reference>
<proteinExistence type="evidence at protein level"/>
<sequence length="240" mass="28161">MEDLLNNAKQHLCMRNPKLIRIGLRQVESIVYHVAKPSHDDKIPREIFLKLQDSPLYNSTTPCIYALDSLLEYQQNEEAYEKNFQFIQKLIDDLLHVIEGLVLIHPKSQTLFEDKATLRLFIHLLQPSQPSMLQVAAMKTLVCIMADRPLAIRLFEQINGLQQICVVFKHKQTSQDTRFQILEFFYFYLSPEPYSIDVIAYRKTRTEKQAYLSKYLSNVQGLRDDLDKFQPFGKLDETFD</sequence>
<name>CDC14_SCHPO</name>
<protein>
    <recommendedName>
        <fullName>Cell division control protein 14</fullName>
    </recommendedName>
</protein>
<comment type="function">
    <text evidence="1 2">Has a role in the septation initiation network (SIN) required for cytokinesis.</text>
</comment>
<comment type="subunit">
    <text evidence="1 2">Interacts with sid1.</text>
</comment>
<comment type="subcellular location">
    <subcellularLocation>
        <location evidence="1 2">Cytoplasm</location>
        <location evidence="1 2">Cytoskeleton</location>
        <location evidence="1 2">Microtubule organizing center</location>
        <location evidence="1 2">Spindle pole body</location>
    </subcellularLocation>
    <text>Localizes to the SPB prior to cytokinesis and leaves once septation is complete.</text>
</comment>
<accession>P36589</accession>